<protein>
    <recommendedName>
        <fullName evidence="1">Trigger factor</fullName>
        <shortName evidence="1">TF</shortName>
        <ecNumber evidence="1">5.2.1.8</ecNumber>
    </recommendedName>
    <alternativeName>
        <fullName evidence="1">PPIase</fullName>
    </alternativeName>
</protein>
<keyword id="KW-0131">Cell cycle</keyword>
<keyword id="KW-0132">Cell division</keyword>
<keyword id="KW-0143">Chaperone</keyword>
<keyword id="KW-0963">Cytoplasm</keyword>
<keyword id="KW-0413">Isomerase</keyword>
<keyword id="KW-0697">Rotamase</keyword>
<reference key="1">
    <citation type="journal article" date="2007" name="Genome Biol.">
        <title>Characterization and modeling of the Haemophilus influenzae core and supragenomes based on the complete genomic sequences of Rd and 12 clinical nontypeable strains.</title>
        <authorList>
            <person name="Hogg J.S."/>
            <person name="Hu F.Z."/>
            <person name="Janto B."/>
            <person name="Boissy R."/>
            <person name="Hayes J."/>
            <person name="Keefe R."/>
            <person name="Post J.C."/>
            <person name="Ehrlich G.D."/>
        </authorList>
    </citation>
    <scope>NUCLEOTIDE SEQUENCE [LARGE SCALE GENOMIC DNA]</scope>
    <source>
        <strain>PittGG</strain>
    </source>
</reference>
<organism>
    <name type="scientific">Haemophilus influenzae (strain PittGG)</name>
    <dbReference type="NCBI Taxonomy" id="374931"/>
    <lineage>
        <taxon>Bacteria</taxon>
        <taxon>Pseudomonadati</taxon>
        <taxon>Pseudomonadota</taxon>
        <taxon>Gammaproteobacteria</taxon>
        <taxon>Pasteurellales</taxon>
        <taxon>Pasteurellaceae</taxon>
        <taxon>Haemophilus</taxon>
    </lineage>
</organism>
<accession>A5UHJ5</accession>
<gene>
    <name evidence="1" type="primary">tig</name>
    <name type="ordered locus">CGSHiGG_06880</name>
</gene>
<proteinExistence type="inferred from homology"/>
<feature type="chain" id="PRO_1000022686" description="Trigger factor">
    <location>
        <begin position="1"/>
        <end position="432"/>
    </location>
</feature>
<feature type="domain" description="PPIase FKBP-type" evidence="1">
    <location>
        <begin position="161"/>
        <end position="246"/>
    </location>
</feature>
<evidence type="ECO:0000255" key="1">
    <source>
        <dbReference type="HAMAP-Rule" id="MF_00303"/>
    </source>
</evidence>
<sequence>MSLNIETTQGLERRVAITVPTEIVSKAIHEEFKRAAKNVRVDGFRKGHVPAHIIEQRFGASIRQDVLNDLLPRHFFDAVIAEKINIAGRPTFAIETFEEGKDLVFTATFEVYPEVKLQGLENIKVEKPTVEITEADIDKMIDVLRKQQATWAESQDIAKADDRVTIDFVGSVDGEEFEGGKATDFVLFMGQGRMIPGFEEGIVGHKAGEQFDIDVTFPAEYHAENLKGKAAKFAITLKKVENMVLPELTDEFVAKFGPNTKSVADLRAEIRKNMERELKNALVSRVKQQVINGLIEQNPIDVPASVVEEEINVLRNQAAQRFGGNTQQAAQLPRELFEAEATRRVQVGLLFSEVIKSNELKADKERAKAMIADIASAYEQPAEVVEYYSKNKELMNNIRNVVLEEQAVDAVLAKAQVTEKVSSFDEIMNPQA</sequence>
<dbReference type="EC" id="5.2.1.8" evidence="1"/>
<dbReference type="EMBL" id="CP000672">
    <property type="protein sequence ID" value="ABR00251.1"/>
    <property type="molecule type" value="Genomic_DNA"/>
</dbReference>
<dbReference type="SMR" id="A5UHJ5"/>
<dbReference type="KEGG" id="hiq:CGSHiGG_06880"/>
<dbReference type="HOGENOM" id="CLU_033058_2_0_6"/>
<dbReference type="Proteomes" id="UP000001990">
    <property type="component" value="Chromosome"/>
</dbReference>
<dbReference type="GO" id="GO:0005737">
    <property type="term" value="C:cytoplasm"/>
    <property type="evidence" value="ECO:0007669"/>
    <property type="project" value="UniProtKB-SubCell"/>
</dbReference>
<dbReference type="GO" id="GO:0003755">
    <property type="term" value="F:peptidyl-prolyl cis-trans isomerase activity"/>
    <property type="evidence" value="ECO:0007669"/>
    <property type="project" value="UniProtKB-UniRule"/>
</dbReference>
<dbReference type="GO" id="GO:0044183">
    <property type="term" value="F:protein folding chaperone"/>
    <property type="evidence" value="ECO:0007669"/>
    <property type="project" value="TreeGrafter"/>
</dbReference>
<dbReference type="GO" id="GO:0043022">
    <property type="term" value="F:ribosome binding"/>
    <property type="evidence" value="ECO:0007669"/>
    <property type="project" value="TreeGrafter"/>
</dbReference>
<dbReference type="GO" id="GO:0051083">
    <property type="term" value="P:'de novo' cotranslational protein folding"/>
    <property type="evidence" value="ECO:0007669"/>
    <property type="project" value="TreeGrafter"/>
</dbReference>
<dbReference type="GO" id="GO:0051301">
    <property type="term" value="P:cell division"/>
    <property type="evidence" value="ECO:0007669"/>
    <property type="project" value="UniProtKB-KW"/>
</dbReference>
<dbReference type="GO" id="GO:0061077">
    <property type="term" value="P:chaperone-mediated protein folding"/>
    <property type="evidence" value="ECO:0007669"/>
    <property type="project" value="TreeGrafter"/>
</dbReference>
<dbReference type="GO" id="GO:0015031">
    <property type="term" value="P:protein transport"/>
    <property type="evidence" value="ECO:0007669"/>
    <property type="project" value="UniProtKB-UniRule"/>
</dbReference>
<dbReference type="GO" id="GO:0043335">
    <property type="term" value="P:protein unfolding"/>
    <property type="evidence" value="ECO:0007669"/>
    <property type="project" value="TreeGrafter"/>
</dbReference>
<dbReference type="FunFam" id="3.10.50.40:FF:000001">
    <property type="entry name" value="Trigger factor"/>
    <property type="match status" value="1"/>
</dbReference>
<dbReference type="Gene3D" id="3.10.50.40">
    <property type="match status" value="1"/>
</dbReference>
<dbReference type="Gene3D" id="3.30.70.1050">
    <property type="entry name" value="Trigger factor ribosome-binding domain"/>
    <property type="match status" value="1"/>
</dbReference>
<dbReference type="Gene3D" id="1.10.3120.10">
    <property type="entry name" value="Trigger factor, C-terminal domain"/>
    <property type="match status" value="1"/>
</dbReference>
<dbReference type="HAMAP" id="MF_00303">
    <property type="entry name" value="Trigger_factor_Tig"/>
    <property type="match status" value="1"/>
</dbReference>
<dbReference type="InterPro" id="IPR046357">
    <property type="entry name" value="PPIase_dom_sf"/>
</dbReference>
<dbReference type="InterPro" id="IPR001179">
    <property type="entry name" value="PPIase_FKBP_dom"/>
</dbReference>
<dbReference type="InterPro" id="IPR005215">
    <property type="entry name" value="Trig_fac"/>
</dbReference>
<dbReference type="InterPro" id="IPR008880">
    <property type="entry name" value="Trigger_fac_C"/>
</dbReference>
<dbReference type="InterPro" id="IPR037041">
    <property type="entry name" value="Trigger_fac_C_sf"/>
</dbReference>
<dbReference type="InterPro" id="IPR008881">
    <property type="entry name" value="Trigger_fac_ribosome-bd_bac"/>
</dbReference>
<dbReference type="InterPro" id="IPR036611">
    <property type="entry name" value="Trigger_fac_ribosome-bd_sf"/>
</dbReference>
<dbReference type="InterPro" id="IPR027304">
    <property type="entry name" value="Trigger_fact/SurA_dom_sf"/>
</dbReference>
<dbReference type="NCBIfam" id="TIGR00115">
    <property type="entry name" value="tig"/>
    <property type="match status" value="1"/>
</dbReference>
<dbReference type="PANTHER" id="PTHR30560">
    <property type="entry name" value="TRIGGER FACTOR CHAPERONE AND PEPTIDYL-PROLYL CIS/TRANS ISOMERASE"/>
    <property type="match status" value="1"/>
</dbReference>
<dbReference type="PANTHER" id="PTHR30560:SF3">
    <property type="entry name" value="TRIGGER FACTOR-LIKE PROTEIN TIG, CHLOROPLASTIC"/>
    <property type="match status" value="1"/>
</dbReference>
<dbReference type="Pfam" id="PF00254">
    <property type="entry name" value="FKBP_C"/>
    <property type="match status" value="1"/>
</dbReference>
<dbReference type="Pfam" id="PF05698">
    <property type="entry name" value="Trigger_C"/>
    <property type="match status" value="1"/>
</dbReference>
<dbReference type="Pfam" id="PF05697">
    <property type="entry name" value="Trigger_N"/>
    <property type="match status" value="1"/>
</dbReference>
<dbReference type="PIRSF" id="PIRSF003095">
    <property type="entry name" value="Trigger_factor"/>
    <property type="match status" value="1"/>
</dbReference>
<dbReference type="SUPFAM" id="SSF54534">
    <property type="entry name" value="FKBP-like"/>
    <property type="match status" value="1"/>
</dbReference>
<dbReference type="SUPFAM" id="SSF109998">
    <property type="entry name" value="Triger factor/SurA peptide-binding domain-like"/>
    <property type="match status" value="1"/>
</dbReference>
<dbReference type="SUPFAM" id="SSF102735">
    <property type="entry name" value="Trigger factor ribosome-binding domain"/>
    <property type="match status" value="1"/>
</dbReference>
<dbReference type="PROSITE" id="PS50059">
    <property type="entry name" value="FKBP_PPIASE"/>
    <property type="match status" value="1"/>
</dbReference>
<comment type="function">
    <text evidence="1">Involved in protein export. Acts as a chaperone by maintaining the newly synthesized protein in an open conformation. Functions as a peptidyl-prolyl cis-trans isomerase.</text>
</comment>
<comment type="catalytic activity">
    <reaction evidence="1">
        <text>[protein]-peptidylproline (omega=180) = [protein]-peptidylproline (omega=0)</text>
        <dbReference type="Rhea" id="RHEA:16237"/>
        <dbReference type="Rhea" id="RHEA-COMP:10747"/>
        <dbReference type="Rhea" id="RHEA-COMP:10748"/>
        <dbReference type="ChEBI" id="CHEBI:83833"/>
        <dbReference type="ChEBI" id="CHEBI:83834"/>
        <dbReference type="EC" id="5.2.1.8"/>
    </reaction>
</comment>
<comment type="subcellular location">
    <subcellularLocation>
        <location>Cytoplasm</location>
    </subcellularLocation>
    <text evidence="1">About half TF is bound to the ribosome near the polypeptide exit tunnel while the other half is free in the cytoplasm.</text>
</comment>
<comment type="domain">
    <text evidence="1">Consists of 3 domains; the N-terminus binds the ribosome, the middle domain has PPIase activity, while the C-terminus has intrinsic chaperone activity on its own.</text>
</comment>
<comment type="similarity">
    <text evidence="1">Belongs to the FKBP-type PPIase family. Tig subfamily.</text>
</comment>
<name>TIG_HAEIG</name>